<sequence length="238" mass="26222">MAQVSMRDMLNAGVHYGHQTRYWNPKMKPFIFGARNGVHVINLEKTLPLFNEALAELTRISSNNGKILFVGTKRAASEAVKAAAVDCQQFYVNHRWLGGMLTNWKTVRQSIKRLKDLETQTQDGTFDKITKKEALMRTRELEKLELSLGGIKDMAGLPDAIFVIGADHEHIAIKEANNLGIPVFAIVDTNSTPDGVNYIIPGNDDATRAIQLYLDAAAAAVKEGRGSNVEAELEATAE</sequence>
<keyword id="KW-0687">Ribonucleoprotein</keyword>
<keyword id="KW-0689">Ribosomal protein</keyword>
<evidence type="ECO:0000255" key="1">
    <source>
        <dbReference type="HAMAP-Rule" id="MF_00291"/>
    </source>
</evidence>
<evidence type="ECO:0000305" key="2"/>
<organism>
    <name type="scientific">Actinobacillus pleuropneumoniae serotype 7 (strain AP76)</name>
    <dbReference type="NCBI Taxonomy" id="537457"/>
    <lineage>
        <taxon>Bacteria</taxon>
        <taxon>Pseudomonadati</taxon>
        <taxon>Pseudomonadota</taxon>
        <taxon>Gammaproteobacteria</taxon>
        <taxon>Pasteurellales</taxon>
        <taxon>Pasteurellaceae</taxon>
        <taxon>Actinobacillus</taxon>
    </lineage>
</organism>
<proteinExistence type="inferred from homology"/>
<reference key="1">
    <citation type="submission" date="2008-06" db="EMBL/GenBank/DDBJ databases">
        <title>Genome and proteome analysis of A. pleuropneumoniae serotype 7.</title>
        <authorList>
            <person name="Linke B."/>
            <person name="Buettner F."/>
            <person name="Martinez-Arias R."/>
            <person name="Goesmann A."/>
            <person name="Baltes N."/>
            <person name="Tegetmeyer H."/>
            <person name="Singh M."/>
            <person name="Gerlach G.F."/>
        </authorList>
    </citation>
    <scope>NUCLEOTIDE SEQUENCE [LARGE SCALE GENOMIC DNA]</scope>
    <source>
        <strain>AP76</strain>
    </source>
</reference>
<gene>
    <name evidence="1" type="primary">rpsB</name>
    <name type="ordered locus">APP7_0610</name>
</gene>
<protein>
    <recommendedName>
        <fullName evidence="1">Small ribosomal subunit protein uS2</fullName>
    </recommendedName>
    <alternativeName>
        <fullName evidence="2">30S ribosomal protein S2</fullName>
    </alternativeName>
</protein>
<accession>B3GXB0</accession>
<name>RS2_ACTP7</name>
<dbReference type="EMBL" id="CP001091">
    <property type="protein sequence ID" value="ACE61262.1"/>
    <property type="molecule type" value="Genomic_DNA"/>
</dbReference>
<dbReference type="RefSeq" id="WP_005603942.1">
    <property type="nucleotide sequence ID" value="NC_010939.1"/>
</dbReference>
<dbReference type="SMR" id="B3GXB0"/>
<dbReference type="KEGG" id="apa:APP7_0610"/>
<dbReference type="HOGENOM" id="CLU_040318_1_2_6"/>
<dbReference type="Proteomes" id="UP000001226">
    <property type="component" value="Chromosome"/>
</dbReference>
<dbReference type="GO" id="GO:0022627">
    <property type="term" value="C:cytosolic small ribosomal subunit"/>
    <property type="evidence" value="ECO:0007669"/>
    <property type="project" value="TreeGrafter"/>
</dbReference>
<dbReference type="GO" id="GO:0003735">
    <property type="term" value="F:structural constituent of ribosome"/>
    <property type="evidence" value="ECO:0007669"/>
    <property type="project" value="InterPro"/>
</dbReference>
<dbReference type="GO" id="GO:0006412">
    <property type="term" value="P:translation"/>
    <property type="evidence" value="ECO:0007669"/>
    <property type="project" value="UniProtKB-UniRule"/>
</dbReference>
<dbReference type="CDD" id="cd01425">
    <property type="entry name" value="RPS2"/>
    <property type="match status" value="1"/>
</dbReference>
<dbReference type="FunFam" id="1.10.287.610:FF:000001">
    <property type="entry name" value="30S ribosomal protein S2"/>
    <property type="match status" value="1"/>
</dbReference>
<dbReference type="Gene3D" id="3.40.50.10490">
    <property type="entry name" value="Glucose-6-phosphate isomerase like protein, domain 1"/>
    <property type="match status" value="1"/>
</dbReference>
<dbReference type="Gene3D" id="1.10.287.610">
    <property type="entry name" value="Helix hairpin bin"/>
    <property type="match status" value="1"/>
</dbReference>
<dbReference type="HAMAP" id="MF_00291_B">
    <property type="entry name" value="Ribosomal_uS2_B"/>
    <property type="match status" value="1"/>
</dbReference>
<dbReference type="InterPro" id="IPR001865">
    <property type="entry name" value="Ribosomal_uS2"/>
</dbReference>
<dbReference type="InterPro" id="IPR005706">
    <property type="entry name" value="Ribosomal_uS2_bac/mit/plastid"/>
</dbReference>
<dbReference type="InterPro" id="IPR018130">
    <property type="entry name" value="Ribosomal_uS2_CS"/>
</dbReference>
<dbReference type="InterPro" id="IPR023591">
    <property type="entry name" value="Ribosomal_uS2_flav_dom_sf"/>
</dbReference>
<dbReference type="NCBIfam" id="TIGR01011">
    <property type="entry name" value="rpsB_bact"/>
    <property type="match status" value="1"/>
</dbReference>
<dbReference type="PANTHER" id="PTHR12534">
    <property type="entry name" value="30S RIBOSOMAL PROTEIN S2 PROKARYOTIC AND ORGANELLAR"/>
    <property type="match status" value="1"/>
</dbReference>
<dbReference type="PANTHER" id="PTHR12534:SF0">
    <property type="entry name" value="SMALL RIBOSOMAL SUBUNIT PROTEIN US2M"/>
    <property type="match status" value="1"/>
</dbReference>
<dbReference type="Pfam" id="PF00318">
    <property type="entry name" value="Ribosomal_S2"/>
    <property type="match status" value="1"/>
</dbReference>
<dbReference type="PRINTS" id="PR00395">
    <property type="entry name" value="RIBOSOMALS2"/>
</dbReference>
<dbReference type="SUPFAM" id="SSF52313">
    <property type="entry name" value="Ribosomal protein S2"/>
    <property type="match status" value="1"/>
</dbReference>
<dbReference type="PROSITE" id="PS00963">
    <property type="entry name" value="RIBOSOMAL_S2_2"/>
    <property type="match status" value="1"/>
</dbReference>
<feature type="chain" id="PRO_1000114985" description="Small ribosomal subunit protein uS2">
    <location>
        <begin position="1"/>
        <end position="238"/>
    </location>
</feature>
<comment type="similarity">
    <text evidence="1">Belongs to the universal ribosomal protein uS2 family.</text>
</comment>